<gene>
    <name type="primary">lap2</name>
    <name type="ORF">AFUA_3G00650</name>
</gene>
<sequence>MVTMKLLYLTSFASLAVANGPGWDWKPRVHPKVLPQMIHLWDLLQGAQQLEDFAYAYPERNRVFGGRAHEDTVNYLYRELKKTGYYDVYKQPQVHQWTRADQALTVDGQSYDATTMTYSPSVNATAPLAVVNNLGCVEADYPADLTGKIALISRGECTFATKSVLSAKAGAAAALVYNNIEGSMAGTLGGATSELGAYAPIAGISLADGQALIQMIQAGTVTANLWIDSQVENRTTYNVIAQTKGGDPNNVVALGGHTDSVEAGPGINDDGSGIISNLVVAKALTRFSVKNAVRFCFWTAEEFGLLGSNYYVNSLNATEQAKIRLYLNFDMIASPNYALMIYDGDGSAFNLTGPAGSAQIERLFEDYYTSIRKPFVPTEFNGRSDYQAFILNGIPAGGLFTGAEAIKTEEQAQLFGGQAGVALDANYHAKGDNMTNLNREAFLINSRATAFAVATYANSLDSIPPRNMTTVVKRSQLEQAMKRTPHTHTGGTGCYKDRVEQ</sequence>
<proteinExistence type="inferred from homology"/>
<dbReference type="EC" id="3.4.11.-"/>
<dbReference type="EMBL" id="AAHF01000010">
    <property type="protein sequence ID" value="EAL86348.2"/>
    <property type="molecule type" value="Genomic_DNA"/>
</dbReference>
<dbReference type="RefSeq" id="XP_748386.2">
    <property type="nucleotide sequence ID" value="XM_743293.2"/>
</dbReference>
<dbReference type="SMR" id="Q4WFX9"/>
<dbReference type="STRING" id="330879.Q4WFX9"/>
<dbReference type="MEROPS" id="M28.001"/>
<dbReference type="GlyCosmos" id="Q4WFX9">
    <property type="glycosylation" value="6 sites, No reported glycans"/>
</dbReference>
<dbReference type="EnsemblFungi" id="EAL86348">
    <property type="protein sequence ID" value="EAL86348"/>
    <property type="gene ID" value="AFUA_3G00650"/>
</dbReference>
<dbReference type="GeneID" id="3505868"/>
<dbReference type="KEGG" id="afm:AFUA_3G00650"/>
<dbReference type="VEuPathDB" id="FungiDB:Afu3g00650"/>
<dbReference type="eggNOG" id="KOG2195">
    <property type="taxonomic scope" value="Eukaryota"/>
</dbReference>
<dbReference type="HOGENOM" id="CLU_024336_0_0_1"/>
<dbReference type="InParanoid" id="Q4WFX9"/>
<dbReference type="OMA" id="VRFCFWT"/>
<dbReference type="OrthoDB" id="2214at2759"/>
<dbReference type="Proteomes" id="UP000002530">
    <property type="component" value="Chromosome 3"/>
</dbReference>
<dbReference type="GO" id="GO:0005576">
    <property type="term" value="C:extracellular region"/>
    <property type="evidence" value="ECO:0007669"/>
    <property type="project" value="UniProtKB-SubCell"/>
</dbReference>
<dbReference type="GO" id="GO:0004177">
    <property type="term" value="F:aminopeptidase activity"/>
    <property type="evidence" value="ECO:0007669"/>
    <property type="project" value="UniProtKB-KW"/>
</dbReference>
<dbReference type="GO" id="GO:0046872">
    <property type="term" value="F:metal ion binding"/>
    <property type="evidence" value="ECO:0007669"/>
    <property type="project" value="UniProtKB-KW"/>
</dbReference>
<dbReference type="GO" id="GO:0008235">
    <property type="term" value="F:metalloexopeptidase activity"/>
    <property type="evidence" value="ECO:0007669"/>
    <property type="project" value="InterPro"/>
</dbReference>
<dbReference type="GO" id="GO:0006508">
    <property type="term" value="P:proteolysis"/>
    <property type="evidence" value="ECO:0000318"/>
    <property type="project" value="GO_Central"/>
</dbReference>
<dbReference type="CDD" id="cd03876">
    <property type="entry name" value="M28_SGAP_like"/>
    <property type="match status" value="1"/>
</dbReference>
<dbReference type="CDD" id="cd02130">
    <property type="entry name" value="PA_ScAPY_like"/>
    <property type="match status" value="1"/>
</dbReference>
<dbReference type="FunFam" id="3.40.630.10:FF:000054">
    <property type="entry name" value="Peptide hydrolase"/>
    <property type="match status" value="1"/>
</dbReference>
<dbReference type="FunFam" id="3.50.30.30:FF:000030">
    <property type="entry name" value="Peptide hydrolase"/>
    <property type="match status" value="1"/>
</dbReference>
<dbReference type="Gene3D" id="3.50.30.30">
    <property type="match status" value="1"/>
</dbReference>
<dbReference type="Gene3D" id="3.40.630.10">
    <property type="entry name" value="Zn peptidases"/>
    <property type="match status" value="1"/>
</dbReference>
<dbReference type="InterPro" id="IPR045175">
    <property type="entry name" value="M28_fam"/>
</dbReference>
<dbReference type="InterPro" id="IPR041756">
    <property type="entry name" value="M28_SGAP-like"/>
</dbReference>
<dbReference type="InterPro" id="IPR046450">
    <property type="entry name" value="PA_dom_sf"/>
</dbReference>
<dbReference type="InterPro" id="IPR003137">
    <property type="entry name" value="PA_domain"/>
</dbReference>
<dbReference type="InterPro" id="IPR007484">
    <property type="entry name" value="Peptidase_M28"/>
</dbReference>
<dbReference type="PANTHER" id="PTHR12147">
    <property type="entry name" value="METALLOPEPTIDASE M28 FAMILY MEMBER"/>
    <property type="match status" value="1"/>
</dbReference>
<dbReference type="PANTHER" id="PTHR12147:SF57">
    <property type="entry name" value="PEPTIDE HYDROLASE"/>
    <property type="match status" value="1"/>
</dbReference>
<dbReference type="Pfam" id="PF02225">
    <property type="entry name" value="PA"/>
    <property type="match status" value="1"/>
</dbReference>
<dbReference type="Pfam" id="PF04389">
    <property type="entry name" value="Peptidase_M28"/>
    <property type="match status" value="1"/>
</dbReference>
<dbReference type="SUPFAM" id="SSF52025">
    <property type="entry name" value="PA domain"/>
    <property type="match status" value="1"/>
</dbReference>
<dbReference type="SUPFAM" id="SSF53187">
    <property type="entry name" value="Zn-dependent exopeptidases"/>
    <property type="match status" value="1"/>
</dbReference>
<organism>
    <name type="scientific">Aspergillus fumigatus (strain ATCC MYA-4609 / CBS 101355 / FGSC A1100 / Af293)</name>
    <name type="common">Neosartorya fumigata</name>
    <dbReference type="NCBI Taxonomy" id="330879"/>
    <lineage>
        <taxon>Eukaryota</taxon>
        <taxon>Fungi</taxon>
        <taxon>Dikarya</taxon>
        <taxon>Ascomycota</taxon>
        <taxon>Pezizomycotina</taxon>
        <taxon>Eurotiomycetes</taxon>
        <taxon>Eurotiomycetidae</taxon>
        <taxon>Eurotiales</taxon>
        <taxon>Aspergillaceae</taxon>
        <taxon>Aspergillus</taxon>
        <taxon>Aspergillus subgen. Fumigati</taxon>
    </lineage>
</organism>
<comment type="function">
    <text evidence="1">Extracellular aminopeptidase that releases a wide variety of amino acids from natural peptides and contributes to pathogenicity.</text>
</comment>
<comment type="cofactor">
    <cofactor evidence="2">
        <name>Zn(2+)</name>
        <dbReference type="ChEBI" id="CHEBI:29105"/>
    </cofactor>
    <text evidence="2">Binds 2 Zn(2+) ions per subunit.</text>
</comment>
<comment type="subunit">
    <text evidence="1">Monomer.</text>
</comment>
<comment type="subcellular location">
    <subcellularLocation>
        <location evidence="1">Secreted</location>
    </subcellularLocation>
</comment>
<comment type="similarity">
    <text evidence="5">Belongs to the peptidase M28 family. M28A subfamily.</text>
</comment>
<reference key="1">
    <citation type="journal article" date="2005" name="Nature">
        <title>Genomic sequence of the pathogenic and allergenic filamentous fungus Aspergillus fumigatus.</title>
        <authorList>
            <person name="Nierman W.C."/>
            <person name="Pain A."/>
            <person name="Anderson M.J."/>
            <person name="Wortman J.R."/>
            <person name="Kim H.S."/>
            <person name="Arroyo J."/>
            <person name="Berriman M."/>
            <person name="Abe K."/>
            <person name="Archer D.B."/>
            <person name="Bermejo C."/>
            <person name="Bennett J.W."/>
            <person name="Bowyer P."/>
            <person name="Chen D."/>
            <person name="Collins M."/>
            <person name="Coulsen R."/>
            <person name="Davies R."/>
            <person name="Dyer P.S."/>
            <person name="Farman M.L."/>
            <person name="Fedorova N."/>
            <person name="Fedorova N.D."/>
            <person name="Feldblyum T.V."/>
            <person name="Fischer R."/>
            <person name="Fosker N."/>
            <person name="Fraser A."/>
            <person name="Garcia J.L."/>
            <person name="Garcia M.J."/>
            <person name="Goble A."/>
            <person name="Goldman G.H."/>
            <person name="Gomi K."/>
            <person name="Griffith-Jones S."/>
            <person name="Gwilliam R."/>
            <person name="Haas B.J."/>
            <person name="Haas H."/>
            <person name="Harris D.E."/>
            <person name="Horiuchi H."/>
            <person name="Huang J."/>
            <person name="Humphray S."/>
            <person name="Jimenez J."/>
            <person name="Keller N."/>
            <person name="Khouri H."/>
            <person name="Kitamoto K."/>
            <person name="Kobayashi T."/>
            <person name="Konzack S."/>
            <person name="Kulkarni R."/>
            <person name="Kumagai T."/>
            <person name="Lafton A."/>
            <person name="Latge J.-P."/>
            <person name="Li W."/>
            <person name="Lord A."/>
            <person name="Lu C."/>
            <person name="Majoros W.H."/>
            <person name="May G.S."/>
            <person name="Miller B.L."/>
            <person name="Mohamoud Y."/>
            <person name="Molina M."/>
            <person name="Monod M."/>
            <person name="Mouyna I."/>
            <person name="Mulligan S."/>
            <person name="Murphy L.D."/>
            <person name="O'Neil S."/>
            <person name="Paulsen I."/>
            <person name="Penalva M.A."/>
            <person name="Pertea M."/>
            <person name="Price C."/>
            <person name="Pritchard B.L."/>
            <person name="Quail M.A."/>
            <person name="Rabbinowitsch E."/>
            <person name="Rawlins N."/>
            <person name="Rajandream M.A."/>
            <person name="Reichard U."/>
            <person name="Renauld H."/>
            <person name="Robson G.D."/>
            <person name="Rodriguez de Cordoba S."/>
            <person name="Rodriguez-Pena J.M."/>
            <person name="Ronning C.M."/>
            <person name="Rutter S."/>
            <person name="Salzberg S.L."/>
            <person name="Sanchez M."/>
            <person name="Sanchez-Ferrero J.C."/>
            <person name="Saunders D."/>
            <person name="Seeger K."/>
            <person name="Squares R."/>
            <person name="Squares S."/>
            <person name="Takeuchi M."/>
            <person name="Tekaia F."/>
            <person name="Turner G."/>
            <person name="Vazquez de Aldana C.R."/>
            <person name="Weidman J."/>
            <person name="White O."/>
            <person name="Woodward J.R."/>
            <person name="Yu J.-H."/>
            <person name="Fraser C.M."/>
            <person name="Galagan J.E."/>
            <person name="Asai K."/>
            <person name="Machida M."/>
            <person name="Hall N."/>
            <person name="Barrell B.G."/>
            <person name="Denning D.W."/>
        </authorList>
    </citation>
    <scope>NUCLEOTIDE SEQUENCE [LARGE SCALE GENOMIC DNA]</scope>
    <source>
        <strain>ATCC MYA-4609 / CBS 101355 / FGSC A1100 / Af293</strain>
    </source>
</reference>
<accession>Q4WFX9</accession>
<keyword id="KW-0031">Aminopeptidase</keyword>
<keyword id="KW-0325">Glycoprotein</keyword>
<keyword id="KW-0378">Hydrolase</keyword>
<keyword id="KW-0479">Metal-binding</keyword>
<keyword id="KW-0482">Metalloprotease</keyword>
<keyword id="KW-0645">Protease</keyword>
<keyword id="KW-1185">Reference proteome</keyword>
<keyword id="KW-0964">Secreted</keyword>
<keyword id="KW-0732">Signal</keyword>
<keyword id="KW-0843">Virulence</keyword>
<keyword id="KW-0862">Zinc</keyword>
<evidence type="ECO:0000250" key="1"/>
<evidence type="ECO:0000250" key="2">
    <source>
        <dbReference type="UniProtKB" id="P80561"/>
    </source>
</evidence>
<evidence type="ECO:0000255" key="3"/>
<evidence type="ECO:0000256" key="4">
    <source>
        <dbReference type="SAM" id="MobiDB-lite"/>
    </source>
</evidence>
<evidence type="ECO:0000305" key="5"/>
<feature type="signal peptide" evidence="3">
    <location>
        <begin position="1"/>
        <end position="18"/>
    </location>
</feature>
<feature type="chain" id="PRO_0000397768" description="Probable leucine aminopeptidase 2">
    <location>
        <begin position="19"/>
        <end position="501"/>
    </location>
</feature>
<feature type="domain" description="PA">
    <location>
        <begin position="119"/>
        <end position="216"/>
    </location>
</feature>
<feature type="region of interest" description="Disordered" evidence="4">
    <location>
        <begin position="480"/>
        <end position="501"/>
    </location>
</feature>
<feature type="active site" description="Proton acceptor" evidence="2">
    <location>
        <position position="301"/>
    </location>
</feature>
<feature type="binding site" evidence="2">
    <location>
        <position position="257"/>
    </location>
    <ligand>
        <name>Zn(2+)</name>
        <dbReference type="ChEBI" id="CHEBI:29105"/>
        <label>1</label>
        <note>catalytic</note>
    </ligand>
</feature>
<feature type="binding site" evidence="2">
    <location>
        <position position="269"/>
    </location>
    <ligand>
        <name>Zn(2+)</name>
        <dbReference type="ChEBI" id="CHEBI:29105"/>
        <label>1</label>
        <note>catalytic</note>
    </ligand>
</feature>
<feature type="binding site" evidence="2">
    <location>
        <position position="269"/>
    </location>
    <ligand>
        <name>Zn(2+)</name>
        <dbReference type="ChEBI" id="CHEBI:29105"/>
        <label>2</label>
        <note>catalytic</note>
    </ligand>
</feature>
<feature type="binding site" evidence="2">
    <location>
        <position position="302"/>
    </location>
    <ligand>
        <name>Zn(2+)</name>
        <dbReference type="ChEBI" id="CHEBI:29105"/>
        <label>2</label>
        <note>catalytic</note>
    </ligand>
</feature>
<feature type="binding site" evidence="2">
    <location>
        <position position="330"/>
    </location>
    <ligand>
        <name>Zn(2+)</name>
        <dbReference type="ChEBI" id="CHEBI:29105"/>
        <label>1</label>
        <note>catalytic</note>
    </ligand>
</feature>
<feature type="binding site" evidence="2">
    <location>
        <position position="428"/>
    </location>
    <ligand>
        <name>Zn(2+)</name>
        <dbReference type="ChEBI" id="CHEBI:29105"/>
        <label>2</label>
        <note>catalytic</note>
    </ligand>
</feature>
<feature type="site" description="Transition state stabilizer" evidence="2">
    <location>
        <position position="427"/>
    </location>
</feature>
<feature type="glycosylation site" description="N-linked (GlcNAc...) asparagine" evidence="3">
    <location>
        <position position="123"/>
    </location>
</feature>
<feature type="glycosylation site" description="N-linked (GlcNAc...) asparagine" evidence="3">
    <location>
        <position position="233"/>
    </location>
</feature>
<feature type="glycosylation site" description="N-linked (GlcNAc...) asparagine" evidence="3">
    <location>
        <position position="316"/>
    </location>
</feature>
<feature type="glycosylation site" description="N-linked (GlcNAc...) asparagine" evidence="3">
    <location>
        <position position="350"/>
    </location>
</feature>
<feature type="glycosylation site" description="N-linked (GlcNAc...) asparagine" evidence="3">
    <location>
        <position position="433"/>
    </location>
</feature>
<feature type="glycosylation site" description="N-linked (GlcNAc...) asparagine" evidence="3">
    <location>
        <position position="467"/>
    </location>
</feature>
<protein>
    <recommendedName>
        <fullName>Probable leucine aminopeptidase 2</fullName>
        <ecNumber>3.4.11.-</ecNumber>
    </recommendedName>
    <alternativeName>
        <fullName>Leucyl aminopeptidase 2</fullName>
        <shortName>LAP2</shortName>
    </alternativeName>
</protein>
<name>LAP2_ASPFU</name>